<reference key="1">
    <citation type="journal article" date="2005" name="J. Bacteriol.">
        <title>Complete genome sequence and analysis of the multiresistant nosocomial pathogen Corynebacterium jeikeium K411, a lipid-requiring bacterium of the human skin flora.</title>
        <authorList>
            <person name="Tauch A."/>
            <person name="Kaiser O."/>
            <person name="Hain T."/>
            <person name="Goesmann A."/>
            <person name="Weisshaar B."/>
            <person name="Albersmeier A."/>
            <person name="Bekel T."/>
            <person name="Bischoff N."/>
            <person name="Brune I."/>
            <person name="Chakraborty T."/>
            <person name="Kalinowski J."/>
            <person name="Meyer F."/>
            <person name="Rupp O."/>
            <person name="Schneiker S."/>
            <person name="Viehoever P."/>
            <person name="Puehler A."/>
        </authorList>
    </citation>
    <scope>NUCLEOTIDE SEQUENCE [LARGE SCALE GENOMIC DNA]</scope>
    <source>
        <strain>K411</strain>
    </source>
</reference>
<evidence type="ECO:0000255" key="1">
    <source>
        <dbReference type="HAMAP-Rule" id="MF_00017"/>
    </source>
</evidence>
<evidence type="ECO:0000256" key="2">
    <source>
        <dbReference type="SAM" id="MobiDB-lite"/>
    </source>
</evidence>
<dbReference type="EMBL" id="CR931997">
    <property type="protein sequence ID" value="CAI38192.1"/>
    <property type="molecule type" value="Genomic_DNA"/>
</dbReference>
<dbReference type="RefSeq" id="WP_005292351.1">
    <property type="nucleotide sequence ID" value="NC_007164.1"/>
</dbReference>
<dbReference type="SMR" id="Q4JSL5"/>
<dbReference type="STRING" id="306537.jk2010"/>
<dbReference type="GeneID" id="92739639"/>
<dbReference type="KEGG" id="cjk:jk2010"/>
<dbReference type="eggNOG" id="COG0353">
    <property type="taxonomic scope" value="Bacteria"/>
</dbReference>
<dbReference type="HOGENOM" id="CLU_060739_1_0_11"/>
<dbReference type="OrthoDB" id="9802672at2"/>
<dbReference type="Proteomes" id="UP000000545">
    <property type="component" value="Chromosome"/>
</dbReference>
<dbReference type="GO" id="GO:0003677">
    <property type="term" value="F:DNA binding"/>
    <property type="evidence" value="ECO:0007669"/>
    <property type="project" value="UniProtKB-UniRule"/>
</dbReference>
<dbReference type="GO" id="GO:0008270">
    <property type="term" value="F:zinc ion binding"/>
    <property type="evidence" value="ECO:0007669"/>
    <property type="project" value="UniProtKB-KW"/>
</dbReference>
<dbReference type="GO" id="GO:0006310">
    <property type="term" value="P:DNA recombination"/>
    <property type="evidence" value="ECO:0007669"/>
    <property type="project" value="UniProtKB-UniRule"/>
</dbReference>
<dbReference type="GO" id="GO:0006281">
    <property type="term" value="P:DNA repair"/>
    <property type="evidence" value="ECO:0007669"/>
    <property type="project" value="UniProtKB-UniRule"/>
</dbReference>
<dbReference type="CDD" id="cd01025">
    <property type="entry name" value="TOPRIM_recR"/>
    <property type="match status" value="1"/>
</dbReference>
<dbReference type="Gene3D" id="3.30.60.80">
    <property type="match status" value="1"/>
</dbReference>
<dbReference type="Gene3D" id="3.40.1360.10">
    <property type="match status" value="1"/>
</dbReference>
<dbReference type="Gene3D" id="6.10.250.240">
    <property type="match status" value="1"/>
</dbReference>
<dbReference type="Gene3D" id="1.10.8.420">
    <property type="entry name" value="RecR Domain 1"/>
    <property type="match status" value="1"/>
</dbReference>
<dbReference type="HAMAP" id="MF_00017">
    <property type="entry name" value="RecR"/>
    <property type="match status" value="1"/>
</dbReference>
<dbReference type="InterPro" id="IPR000093">
    <property type="entry name" value="DNA_Rcmb_RecR"/>
</dbReference>
<dbReference type="InterPro" id="IPR023627">
    <property type="entry name" value="Rcmb_RecR"/>
</dbReference>
<dbReference type="InterPro" id="IPR015967">
    <property type="entry name" value="Rcmb_RecR_Znf"/>
</dbReference>
<dbReference type="InterPro" id="IPR006171">
    <property type="entry name" value="TOPRIM_dom"/>
</dbReference>
<dbReference type="InterPro" id="IPR034137">
    <property type="entry name" value="TOPRIM_RecR"/>
</dbReference>
<dbReference type="NCBIfam" id="TIGR00615">
    <property type="entry name" value="recR"/>
    <property type="match status" value="1"/>
</dbReference>
<dbReference type="PANTHER" id="PTHR30446">
    <property type="entry name" value="RECOMBINATION PROTEIN RECR"/>
    <property type="match status" value="1"/>
</dbReference>
<dbReference type="PANTHER" id="PTHR30446:SF0">
    <property type="entry name" value="RECOMBINATION PROTEIN RECR"/>
    <property type="match status" value="1"/>
</dbReference>
<dbReference type="Pfam" id="PF21175">
    <property type="entry name" value="RecR_C"/>
    <property type="match status" value="1"/>
</dbReference>
<dbReference type="Pfam" id="PF21176">
    <property type="entry name" value="RecR_HhH"/>
    <property type="match status" value="1"/>
</dbReference>
<dbReference type="Pfam" id="PF02132">
    <property type="entry name" value="RecR_ZnF"/>
    <property type="match status" value="1"/>
</dbReference>
<dbReference type="Pfam" id="PF13662">
    <property type="entry name" value="Toprim_4"/>
    <property type="match status" value="2"/>
</dbReference>
<dbReference type="SMART" id="SM00493">
    <property type="entry name" value="TOPRIM"/>
    <property type="match status" value="1"/>
</dbReference>
<dbReference type="SUPFAM" id="SSF111304">
    <property type="entry name" value="Recombination protein RecR"/>
    <property type="match status" value="2"/>
</dbReference>
<dbReference type="PROSITE" id="PS01300">
    <property type="entry name" value="RECR"/>
    <property type="match status" value="1"/>
</dbReference>
<dbReference type="PROSITE" id="PS50880">
    <property type="entry name" value="TOPRIM"/>
    <property type="match status" value="1"/>
</dbReference>
<gene>
    <name evidence="1" type="primary">recR</name>
    <name type="ordered locus">jk2010</name>
</gene>
<organism>
    <name type="scientific">Corynebacterium jeikeium (strain K411)</name>
    <dbReference type="NCBI Taxonomy" id="306537"/>
    <lineage>
        <taxon>Bacteria</taxon>
        <taxon>Bacillati</taxon>
        <taxon>Actinomycetota</taxon>
        <taxon>Actinomycetes</taxon>
        <taxon>Mycobacteriales</taxon>
        <taxon>Corynebacteriaceae</taxon>
        <taxon>Corynebacterium</taxon>
    </lineage>
</organism>
<keyword id="KW-0227">DNA damage</keyword>
<keyword id="KW-0233">DNA recombination</keyword>
<keyword id="KW-0234">DNA repair</keyword>
<keyword id="KW-0479">Metal-binding</keyword>
<keyword id="KW-1185">Reference proteome</keyword>
<keyword id="KW-0862">Zinc</keyword>
<keyword id="KW-0863">Zinc-finger</keyword>
<proteinExistence type="inferred from homology"/>
<comment type="function">
    <text evidence="1">May play a role in DNA repair. It seems to be involved in an RecBC-independent recombinational process of DNA repair. It may act with RecF and RecO.</text>
</comment>
<comment type="similarity">
    <text evidence="1">Belongs to the RecR family.</text>
</comment>
<feature type="chain" id="PRO_0000322881" description="Recombination protein RecR">
    <location>
        <begin position="1"/>
        <end position="250"/>
    </location>
</feature>
<feature type="domain" description="Toprim" evidence="1">
    <location>
        <begin position="79"/>
        <end position="227"/>
    </location>
</feature>
<feature type="zinc finger region" description="C4-type" evidence="1">
    <location>
        <begin position="56"/>
        <end position="71"/>
    </location>
</feature>
<feature type="region of interest" description="Disordered" evidence="2">
    <location>
        <begin position="148"/>
        <end position="172"/>
    </location>
</feature>
<name>RECR_CORJK</name>
<accession>Q4JSL5</accession>
<protein>
    <recommendedName>
        <fullName evidence="1">Recombination protein RecR</fullName>
    </recommendedName>
</protein>
<sequence>MFEGPLQDVIDEFSRLPGIGPKSAQRIALHLLNEEPEDIERFQSALGRLQRGVTFCRICHNISQEDVCRICADSNRDKSIICVVEESKDIQVIERTAEYRGRYHVLGGALDPLNGIGPKELNVTPLVQRIGGALPDVALGAKGGGASLGDADTPADGESSGADAAETGNAKTAAVETDVEYDEAPEITEVIIATDPNTEGEATASYLGRLLRDFPGLTVTRLASGIPMGGDLEFVDELTLSRAFAGRTAL</sequence>